<evidence type="ECO:0000255" key="1">
    <source>
        <dbReference type="HAMAP-Rule" id="MF_00411"/>
    </source>
</evidence>
<keyword id="KW-0963">Cytoplasm</keyword>
<keyword id="KW-0238">DNA-binding</keyword>
<keyword id="KW-0240">DNA-directed RNA polymerase</keyword>
<keyword id="KW-0548">Nucleotidyltransferase</keyword>
<keyword id="KW-0804">Transcription</keyword>
<keyword id="KW-0808">Transferase</keyword>
<reference key="1">
    <citation type="journal article" date="2009" name="Proc. Natl. Acad. Sci. U.S.A.">
        <title>Biogeography of the Sulfolobus islandicus pan-genome.</title>
        <authorList>
            <person name="Reno M.L."/>
            <person name="Held N.L."/>
            <person name="Fields C.J."/>
            <person name="Burke P.V."/>
            <person name="Whitaker R.J."/>
        </authorList>
    </citation>
    <scope>NUCLEOTIDE SEQUENCE [LARGE SCALE GENOMIC DNA]</scope>
    <source>
        <strain>M.16.27</strain>
    </source>
</reference>
<organism>
    <name type="scientific">Saccharolobus islandicus (strain M.16.27)</name>
    <name type="common">Sulfolobus islandicus</name>
    <dbReference type="NCBI Taxonomy" id="427318"/>
    <lineage>
        <taxon>Archaea</taxon>
        <taxon>Thermoproteota</taxon>
        <taxon>Thermoprotei</taxon>
        <taxon>Sulfolobales</taxon>
        <taxon>Sulfolobaceae</taxon>
        <taxon>Saccharolobus</taxon>
    </lineage>
</organism>
<dbReference type="EC" id="2.7.7.6" evidence="1"/>
<dbReference type="EMBL" id="CP001401">
    <property type="protein sequence ID" value="ACP55861.1"/>
    <property type="molecule type" value="Genomic_DNA"/>
</dbReference>
<dbReference type="RefSeq" id="WP_012711886.1">
    <property type="nucleotide sequence ID" value="NC_012632.1"/>
</dbReference>
<dbReference type="SMR" id="C3MZM9"/>
<dbReference type="GeneID" id="84062225"/>
<dbReference type="KEGG" id="sim:M1627_1990"/>
<dbReference type="HOGENOM" id="CLU_037097_1_0_2"/>
<dbReference type="Proteomes" id="UP000002307">
    <property type="component" value="Chromosome"/>
</dbReference>
<dbReference type="GO" id="GO:0005737">
    <property type="term" value="C:cytoplasm"/>
    <property type="evidence" value="ECO:0007669"/>
    <property type="project" value="UniProtKB-SubCell"/>
</dbReference>
<dbReference type="GO" id="GO:0000428">
    <property type="term" value="C:DNA-directed RNA polymerase complex"/>
    <property type="evidence" value="ECO:0007669"/>
    <property type="project" value="UniProtKB-KW"/>
</dbReference>
<dbReference type="GO" id="GO:0003677">
    <property type="term" value="F:DNA binding"/>
    <property type="evidence" value="ECO:0007669"/>
    <property type="project" value="UniProtKB-UniRule"/>
</dbReference>
<dbReference type="GO" id="GO:0003899">
    <property type="term" value="F:DNA-directed RNA polymerase activity"/>
    <property type="evidence" value="ECO:0007669"/>
    <property type="project" value="UniProtKB-UniRule"/>
</dbReference>
<dbReference type="GO" id="GO:0006351">
    <property type="term" value="P:DNA-templated transcription"/>
    <property type="evidence" value="ECO:0007669"/>
    <property type="project" value="UniProtKB-UniRule"/>
</dbReference>
<dbReference type="CDD" id="cd06528">
    <property type="entry name" value="RNAP_A"/>
    <property type="match status" value="1"/>
</dbReference>
<dbReference type="Gene3D" id="1.10.150.390">
    <property type="match status" value="1"/>
</dbReference>
<dbReference type="HAMAP" id="MF_00411">
    <property type="entry name" value="RNApol_arch_Rpo1C"/>
    <property type="match status" value="1"/>
</dbReference>
<dbReference type="InterPro" id="IPR045867">
    <property type="entry name" value="DNA-dir_RpoC_beta_prime"/>
</dbReference>
<dbReference type="InterPro" id="IPR007081">
    <property type="entry name" value="RNA_pol_Rpb1_5"/>
</dbReference>
<dbReference type="InterPro" id="IPR012757">
    <property type="entry name" value="RPO1C"/>
</dbReference>
<dbReference type="NCBIfam" id="TIGR02389">
    <property type="entry name" value="RNA_pol_rpoA2"/>
    <property type="match status" value="1"/>
</dbReference>
<dbReference type="PANTHER" id="PTHR19376">
    <property type="entry name" value="DNA-DIRECTED RNA POLYMERASE"/>
    <property type="match status" value="1"/>
</dbReference>
<dbReference type="PANTHER" id="PTHR19376:SF32">
    <property type="entry name" value="DNA-DIRECTED RNA POLYMERASE III SUBUNIT RPC1"/>
    <property type="match status" value="1"/>
</dbReference>
<dbReference type="Pfam" id="PF04998">
    <property type="entry name" value="RNA_pol_Rpb1_5"/>
    <property type="match status" value="1"/>
</dbReference>
<dbReference type="SUPFAM" id="SSF64484">
    <property type="entry name" value="beta and beta-prime subunits of DNA dependent RNA-polymerase"/>
    <property type="match status" value="1"/>
</dbReference>
<sequence>MIDEKDKSYLEEKVKQASNILPQKIVEDLKNLISNKEVLVTRDEIDKIFDLAIKEYSEGLIAPGEAIGIVAAQSVGEPGTQMTLRTFHFAGIRELNVTLGLPRLIEIVDAKKVPSTPMMTIYLTDEYKHDKEKALEVARKLEYTKIENVVSSTSIDIASMSIILQLDNEMLKDKGVTVDDVKKAINRLKLGEFVIDESEGNTLNISFANIDSIAALFKLRDKILNTKIKGIKGIKRAIVQKKGDEYIILTDGSNLSGVLSVKGVDIAKVETNNIREIEEVFGIEAAREIIIREISKVLAEQGLDVDMRHILLVADVMTRTGVVRQIGRHGVTGEKNSVLARAAFEVTVKHLLDAAARGDVEEFKGVVENIIIGHPIKLGTGMVELTMRPILR</sequence>
<protein>
    <recommendedName>
        <fullName evidence="1">DNA-directed RNA polymerase subunit Rpo1C</fullName>
        <ecNumber evidence="1">2.7.7.6</ecNumber>
    </recommendedName>
    <alternativeName>
        <fullName evidence="1">DNA-directed RNA polymerase subunit A''</fullName>
    </alternativeName>
</protein>
<feature type="chain" id="PRO_1000205983" description="DNA-directed RNA polymerase subunit Rpo1C">
    <location>
        <begin position="1"/>
        <end position="392"/>
    </location>
</feature>
<accession>C3MZM9</accession>
<proteinExistence type="inferred from homology"/>
<name>RPO1C_SACI3</name>
<comment type="function">
    <text evidence="1">DNA-dependent RNA polymerase (RNAP) catalyzes the transcription of DNA into RNA using the four ribonucleoside triphosphates as substrates. Forms part of the jaw domain.</text>
</comment>
<comment type="catalytic activity">
    <reaction evidence="1">
        <text>RNA(n) + a ribonucleoside 5'-triphosphate = RNA(n+1) + diphosphate</text>
        <dbReference type="Rhea" id="RHEA:21248"/>
        <dbReference type="Rhea" id="RHEA-COMP:14527"/>
        <dbReference type="Rhea" id="RHEA-COMP:17342"/>
        <dbReference type="ChEBI" id="CHEBI:33019"/>
        <dbReference type="ChEBI" id="CHEBI:61557"/>
        <dbReference type="ChEBI" id="CHEBI:140395"/>
        <dbReference type="EC" id="2.7.7.6"/>
    </reaction>
</comment>
<comment type="subunit">
    <text evidence="1">Part of the RNA polymerase complex.</text>
</comment>
<comment type="subcellular location">
    <subcellularLocation>
        <location evidence="1">Cytoplasm</location>
    </subcellularLocation>
</comment>
<comment type="similarity">
    <text evidence="1">Belongs to the RNA polymerase beta' chain family.</text>
</comment>
<gene>
    <name evidence="1" type="primary">rpo1C</name>
    <name evidence="1" type="synonym">rpoA2</name>
    <name type="ordered locus">M1627_1990</name>
</gene>